<dbReference type="EC" id="1.17.7.3" evidence="1"/>
<dbReference type="EMBL" id="CP000474">
    <property type="protein sequence ID" value="ABM07950.1"/>
    <property type="molecule type" value="Genomic_DNA"/>
</dbReference>
<dbReference type="RefSeq" id="WP_011774258.1">
    <property type="nucleotide sequence ID" value="NC_008711.1"/>
</dbReference>
<dbReference type="SMR" id="A1R501"/>
<dbReference type="STRING" id="290340.AAur_1546"/>
<dbReference type="GeneID" id="97300461"/>
<dbReference type="KEGG" id="aau:AAur_1546"/>
<dbReference type="eggNOG" id="COG0821">
    <property type="taxonomic scope" value="Bacteria"/>
</dbReference>
<dbReference type="HOGENOM" id="CLU_042258_0_0_11"/>
<dbReference type="OrthoDB" id="9803214at2"/>
<dbReference type="UniPathway" id="UPA00056">
    <property type="reaction ID" value="UER00096"/>
</dbReference>
<dbReference type="Proteomes" id="UP000000637">
    <property type="component" value="Chromosome"/>
</dbReference>
<dbReference type="GO" id="GO:0051539">
    <property type="term" value="F:4 iron, 4 sulfur cluster binding"/>
    <property type="evidence" value="ECO:0007669"/>
    <property type="project" value="UniProtKB-UniRule"/>
</dbReference>
<dbReference type="GO" id="GO:0046429">
    <property type="term" value="F:4-hydroxy-3-methylbut-2-en-1-yl diphosphate synthase activity (ferredoxin)"/>
    <property type="evidence" value="ECO:0007669"/>
    <property type="project" value="UniProtKB-UniRule"/>
</dbReference>
<dbReference type="GO" id="GO:0141197">
    <property type="term" value="F:4-hydroxy-3-methylbut-2-enyl-diphosphate synthase activity (flavodoxin)"/>
    <property type="evidence" value="ECO:0007669"/>
    <property type="project" value="UniProtKB-EC"/>
</dbReference>
<dbReference type="GO" id="GO:0005506">
    <property type="term" value="F:iron ion binding"/>
    <property type="evidence" value="ECO:0007669"/>
    <property type="project" value="InterPro"/>
</dbReference>
<dbReference type="GO" id="GO:0019288">
    <property type="term" value="P:isopentenyl diphosphate biosynthetic process, methylerythritol 4-phosphate pathway"/>
    <property type="evidence" value="ECO:0007669"/>
    <property type="project" value="UniProtKB-UniRule"/>
</dbReference>
<dbReference type="GO" id="GO:0016114">
    <property type="term" value="P:terpenoid biosynthetic process"/>
    <property type="evidence" value="ECO:0007669"/>
    <property type="project" value="InterPro"/>
</dbReference>
<dbReference type="FunFam" id="3.20.20.20:FF:000001">
    <property type="entry name" value="4-hydroxy-3-methylbut-2-en-1-yl diphosphate synthase (flavodoxin)"/>
    <property type="match status" value="1"/>
</dbReference>
<dbReference type="FunFam" id="3.30.413.10:FF:000001">
    <property type="entry name" value="4-hydroxy-3-methylbut-2-en-1-yl diphosphate synthase (flavodoxin)"/>
    <property type="match status" value="1"/>
</dbReference>
<dbReference type="Gene3D" id="3.20.20.20">
    <property type="entry name" value="Dihydropteroate synthase-like"/>
    <property type="match status" value="1"/>
</dbReference>
<dbReference type="Gene3D" id="3.30.413.10">
    <property type="entry name" value="Sulfite Reductase Hemoprotein, domain 1"/>
    <property type="match status" value="1"/>
</dbReference>
<dbReference type="HAMAP" id="MF_00159">
    <property type="entry name" value="IspG"/>
    <property type="match status" value="1"/>
</dbReference>
<dbReference type="InterPro" id="IPR011005">
    <property type="entry name" value="Dihydropteroate_synth-like_sf"/>
</dbReference>
<dbReference type="InterPro" id="IPR016425">
    <property type="entry name" value="IspG_bac"/>
</dbReference>
<dbReference type="InterPro" id="IPR004588">
    <property type="entry name" value="IspG_bac-typ"/>
</dbReference>
<dbReference type="InterPro" id="IPR045854">
    <property type="entry name" value="NO2/SO3_Rdtase_4Fe4S_sf"/>
</dbReference>
<dbReference type="NCBIfam" id="TIGR00612">
    <property type="entry name" value="ispG_gcpE"/>
    <property type="match status" value="1"/>
</dbReference>
<dbReference type="NCBIfam" id="NF001540">
    <property type="entry name" value="PRK00366.1"/>
    <property type="match status" value="1"/>
</dbReference>
<dbReference type="PANTHER" id="PTHR30454">
    <property type="entry name" value="4-HYDROXY-3-METHYLBUT-2-EN-1-YL DIPHOSPHATE SYNTHASE"/>
    <property type="match status" value="1"/>
</dbReference>
<dbReference type="PANTHER" id="PTHR30454:SF0">
    <property type="entry name" value="4-HYDROXY-3-METHYLBUT-2-EN-1-YL DIPHOSPHATE SYNTHASE (FERREDOXIN), CHLOROPLASTIC"/>
    <property type="match status" value="1"/>
</dbReference>
<dbReference type="Pfam" id="PF04551">
    <property type="entry name" value="GcpE"/>
    <property type="match status" value="1"/>
</dbReference>
<dbReference type="PIRSF" id="PIRSF004640">
    <property type="entry name" value="IspG"/>
    <property type="match status" value="1"/>
</dbReference>
<dbReference type="SUPFAM" id="SSF51717">
    <property type="entry name" value="Dihydropteroate synthetase-like"/>
    <property type="match status" value="1"/>
</dbReference>
<dbReference type="SUPFAM" id="SSF56014">
    <property type="entry name" value="Nitrite and sulphite reductase 4Fe-4S domain-like"/>
    <property type="match status" value="1"/>
</dbReference>
<name>ISPG_PAEAT</name>
<sequence length="388" mass="40793">MTSVSLGMPAAPPPVLAPRRKTRQIKVGSVGVGSDSPISVQSMTTTPTTDINATLQQIAELTASGCDIVRVACPSADDAEALPIIARKSQIPVIADIHFQPKYVFAAIEAGCAAVRVNPGNIRKFDDQVKEIAAAARDHGTSIRIGVNAGSLEPGIMKKYGKATPEALVESAVWEASLFEEHGFHDFKISVKHNDPVIMVAAYEMLAEKGDWPLHLGVTEAGPAFQGTIKSATAFGALLSRGIGDTIRVSLSAPPVEEIKVGNQILQSLNLRPRKLEIVSCPSCGRAQVDVYTLAEQVTAGLEGMEIPLRVAVMGCVVNGPGEAREADLGVASGNGKGQIFVKGEVIKTVPESEIVETLIEEAMRIAEEMGEADGEDAVKGSPVVSVS</sequence>
<accession>A1R501</accession>
<protein>
    <recommendedName>
        <fullName evidence="1">4-hydroxy-3-methylbut-2-en-1-yl diphosphate synthase (flavodoxin)</fullName>
        <ecNumber evidence="1">1.17.7.3</ecNumber>
    </recommendedName>
    <alternativeName>
        <fullName evidence="1">1-hydroxy-2-methyl-2-(E)-butenyl 4-diphosphate synthase</fullName>
    </alternativeName>
</protein>
<reference key="1">
    <citation type="journal article" date="2006" name="PLoS Genet.">
        <title>Secrets of soil survival revealed by the genome sequence of Arthrobacter aurescens TC1.</title>
        <authorList>
            <person name="Mongodin E.F."/>
            <person name="Shapir N."/>
            <person name="Daugherty S.C."/>
            <person name="DeBoy R.T."/>
            <person name="Emerson J.B."/>
            <person name="Shvartzbeyn A."/>
            <person name="Radune D."/>
            <person name="Vamathevan J."/>
            <person name="Riggs F."/>
            <person name="Grinberg V."/>
            <person name="Khouri H.M."/>
            <person name="Wackett L.P."/>
            <person name="Nelson K.E."/>
            <person name="Sadowsky M.J."/>
        </authorList>
    </citation>
    <scope>NUCLEOTIDE SEQUENCE [LARGE SCALE GENOMIC DNA]</scope>
    <source>
        <strain>TC1</strain>
    </source>
</reference>
<keyword id="KW-0004">4Fe-4S</keyword>
<keyword id="KW-0408">Iron</keyword>
<keyword id="KW-0411">Iron-sulfur</keyword>
<keyword id="KW-0414">Isoprene biosynthesis</keyword>
<keyword id="KW-0479">Metal-binding</keyword>
<keyword id="KW-0560">Oxidoreductase</keyword>
<evidence type="ECO:0000255" key="1">
    <source>
        <dbReference type="HAMAP-Rule" id="MF_00159"/>
    </source>
</evidence>
<gene>
    <name evidence="1" type="primary">ispG</name>
    <name type="ordered locus">AAur_1546</name>
</gene>
<feature type="chain" id="PRO_1000011435" description="4-hydroxy-3-methylbut-2-en-1-yl diphosphate synthase (flavodoxin)">
    <location>
        <begin position="1"/>
        <end position="388"/>
    </location>
</feature>
<feature type="binding site" evidence="1">
    <location>
        <position position="281"/>
    </location>
    <ligand>
        <name>[4Fe-4S] cluster</name>
        <dbReference type="ChEBI" id="CHEBI:49883"/>
    </ligand>
</feature>
<feature type="binding site" evidence="1">
    <location>
        <position position="284"/>
    </location>
    <ligand>
        <name>[4Fe-4S] cluster</name>
        <dbReference type="ChEBI" id="CHEBI:49883"/>
    </ligand>
</feature>
<feature type="binding site" evidence="1">
    <location>
        <position position="316"/>
    </location>
    <ligand>
        <name>[4Fe-4S] cluster</name>
        <dbReference type="ChEBI" id="CHEBI:49883"/>
    </ligand>
</feature>
<feature type="binding site" evidence="1">
    <location>
        <position position="323"/>
    </location>
    <ligand>
        <name>[4Fe-4S] cluster</name>
        <dbReference type="ChEBI" id="CHEBI:49883"/>
    </ligand>
</feature>
<comment type="function">
    <text evidence="1">Converts 2C-methyl-D-erythritol 2,4-cyclodiphosphate (ME-2,4cPP) into 1-hydroxy-2-methyl-2-(E)-butenyl 4-diphosphate.</text>
</comment>
<comment type="catalytic activity">
    <reaction evidence="1">
        <text>(2E)-4-hydroxy-3-methylbut-2-enyl diphosphate + oxidized [flavodoxin] + H2O + 2 H(+) = 2-C-methyl-D-erythritol 2,4-cyclic diphosphate + reduced [flavodoxin]</text>
        <dbReference type="Rhea" id="RHEA:43604"/>
        <dbReference type="Rhea" id="RHEA-COMP:10622"/>
        <dbReference type="Rhea" id="RHEA-COMP:10623"/>
        <dbReference type="ChEBI" id="CHEBI:15377"/>
        <dbReference type="ChEBI" id="CHEBI:15378"/>
        <dbReference type="ChEBI" id="CHEBI:57618"/>
        <dbReference type="ChEBI" id="CHEBI:58210"/>
        <dbReference type="ChEBI" id="CHEBI:58483"/>
        <dbReference type="ChEBI" id="CHEBI:128753"/>
        <dbReference type="EC" id="1.17.7.3"/>
    </reaction>
</comment>
<comment type="cofactor">
    <cofactor evidence="1">
        <name>[4Fe-4S] cluster</name>
        <dbReference type="ChEBI" id="CHEBI:49883"/>
    </cofactor>
    <text evidence="1">Binds 1 [4Fe-4S] cluster.</text>
</comment>
<comment type="pathway">
    <text evidence="1">Isoprenoid biosynthesis; isopentenyl diphosphate biosynthesis via DXP pathway; isopentenyl diphosphate from 1-deoxy-D-xylulose 5-phosphate: step 5/6.</text>
</comment>
<comment type="similarity">
    <text evidence="1">Belongs to the IspG family.</text>
</comment>
<organism>
    <name type="scientific">Paenarthrobacter aurescens (strain TC1)</name>
    <dbReference type="NCBI Taxonomy" id="290340"/>
    <lineage>
        <taxon>Bacteria</taxon>
        <taxon>Bacillati</taxon>
        <taxon>Actinomycetota</taxon>
        <taxon>Actinomycetes</taxon>
        <taxon>Micrococcales</taxon>
        <taxon>Micrococcaceae</taxon>
        <taxon>Paenarthrobacter</taxon>
    </lineage>
</organism>
<proteinExistence type="inferred from homology"/>